<accession>Q9FMD3</accession>
<sequence>MRRSISSKAKSFLHRNLLYSGNSGTSPSSSFSICGFCFSRRAYSNGSDYREMLRNGIRFMKLDDSLDLFFHMVQCRPLPSIADFSRLLSAISKMKKYDVVIYLWEQMQMLGIPHNLCTCNILLNCFCRCSQLSLALSFLGKMIKLGHEPSIVTFGSLLNGFCRGDRVYDALYMFDQMVGMGYKPNVVIYNTIIDGLCKSKQVDNALDLLNRMEKDGIGPDVVTYNSLISGLCSSGRWSDATRMVSCMTKREIYPDVFTFNALIDACVKEGRVSEAEEFYEEMIRRSLDPDIVTYSLLIYGLCMYSRLDEAEEMFGFMVSKGCFPDVVTYSILINGYCKSKKVEHGMKLFCEMSQRGVVRNTVTYTILIQGYCRAGKLNVAEEIFRRMVFCGVHPNIITYNVLLHGLCDNGKIEKALVILADMQKNGMDADIVTYNIIIRGMCKAGEVADAWDIYCSLNCQGLMPDIWTYTTMMLGLYKKGLRREADALFRKMKEDGILPNECYV</sequence>
<dbReference type="EMBL" id="AB008270">
    <property type="protein sequence ID" value="BAB10191.1"/>
    <property type="molecule type" value="Genomic_DNA"/>
</dbReference>
<dbReference type="EMBL" id="CP002688">
    <property type="protein sequence ID" value="AED92321.1"/>
    <property type="molecule type" value="Genomic_DNA"/>
</dbReference>
<dbReference type="EMBL" id="AK228701">
    <property type="protein sequence ID" value="BAF00605.1"/>
    <property type="molecule type" value="mRNA"/>
</dbReference>
<dbReference type="RefSeq" id="NP_197167.1">
    <property type="nucleotide sequence ID" value="NM_121670.4"/>
</dbReference>
<dbReference type="SMR" id="Q9FMD3"/>
<dbReference type="FunCoup" id="Q9FMD3">
    <property type="interactions" value="160"/>
</dbReference>
<dbReference type="STRING" id="3702.Q9FMD3"/>
<dbReference type="PaxDb" id="3702-AT5G16640.1"/>
<dbReference type="ProteomicsDB" id="249270"/>
<dbReference type="EnsemblPlants" id="AT5G16640.1">
    <property type="protein sequence ID" value="AT5G16640.1"/>
    <property type="gene ID" value="AT5G16640"/>
</dbReference>
<dbReference type="GeneID" id="831526"/>
<dbReference type="Gramene" id="AT5G16640.1">
    <property type="protein sequence ID" value="AT5G16640.1"/>
    <property type="gene ID" value="AT5G16640"/>
</dbReference>
<dbReference type="KEGG" id="ath:AT5G16640"/>
<dbReference type="Araport" id="AT5G16640"/>
<dbReference type="TAIR" id="AT5G16640"/>
<dbReference type="eggNOG" id="KOG4197">
    <property type="taxonomic scope" value="Eukaryota"/>
</dbReference>
<dbReference type="HOGENOM" id="CLU_002706_49_0_1"/>
<dbReference type="InParanoid" id="Q9FMD3"/>
<dbReference type="OMA" id="WEQMQML"/>
<dbReference type="OrthoDB" id="185373at2759"/>
<dbReference type="PhylomeDB" id="Q9FMD3"/>
<dbReference type="PRO" id="PR:Q9FMD3"/>
<dbReference type="Proteomes" id="UP000006548">
    <property type="component" value="Chromosome 5"/>
</dbReference>
<dbReference type="ExpressionAtlas" id="Q9FMD3">
    <property type="expression patterns" value="baseline and differential"/>
</dbReference>
<dbReference type="GO" id="GO:0005739">
    <property type="term" value="C:mitochondrion"/>
    <property type="evidence" value="ECO:0007669"/>
    <property type="project" value="UniProtKB-SubCell"/>
</dbReference>
<dbReference type="FunFam" id="1.25.40.10:FF:000294">
    <property type="entry name" value="Pentatricopeptide repeat-containing protein At1g09900"/>
    <property type="match status" value="1"/>
</dbReference>
<dbReference type="Gene3D" id="1.25.40.10">
    <property type="entry name" value="Tetratricopeptide repeat domain"/>
    <property type="match status" value="6"/>
</dbReference>
<dbReference type="InterPro" id="IPR002885">
    <property type="entry name" value="Pentatricopeptide_rpt"/>
</dbReference>
<dbReference type="InterPro" id="IPR011990">
    <property type="entry name" value="TPR-like_helical_dom_sf"/>
</dbReference>
<dbReference type="NCBIfam" id="TIGR00756">
    <property type="entry name" value="PPR"/>
    <property type="match status" value="11"/>
</dbReference>
<dbReference type="PANTHER" id="PTHR47938:SF46">
    <property type="entry name" value="PENTACOTRIPEPTIDE-REPEAT REGION OF PRORP DOMAIN-CONTAINING PROTEIN"/>
    <property type="match status" value="1"/>
</dbReference>
<dbReference type="PANTHER" id="PTHR47938">
    <property type="entry name" value="RESPIRATORY COMPLEX I CHAPERONE (CIA84), PUTATIVE (AFU_ORTHOLOGUE AFUA_2G06020)-RELATED"/>
    <property type="match status" value="1"/>
</dbReference>
<dbReference type="Pfam" id="PF01535">
    <property type="entry name" value="PPR"/>
    <property type="match status" value="1"/>
</dbReference>
<dbReference type="Pfam" id="PF13041">
    <property type="entry name" value="PPR_2"/>
    <property type="match status" value="5"/>
</dbReference>
<dbReference type="PROSITE" id="PS51375">
    <property type="entry name" value="PPR"/>
    <property type="match status" value="13"/>
</dbReference>
<comment type="subcellular location">
    <subcellularLocation>
        <location evidence="2">Mitochondrion</location>
    </subcellularLocation>
</comment>
<comment type="similarity">
    <text evidence="2">Belongs to the PPR family. P subfamily.</text>
</comment>
<comment type="online information" name="Pentatricopeptide repeat proteins">
    <link uri="https://ppr.plantenergy.uwa.edu.au"/>
</comment>
<reference key="1">
    <citation type="journal article" date="1997" name="DNA Res.">
        <title>Structural analysis of Arabidopsis thaliana chromosome 5. III. Sequence features of the regions of 1,191,918 bp covered by seventeen physically assigned P1 clones.</title>
        <authorList>
            <person name="Nakamura Y."/>
            <person name="Sato S."/>
            <person name="Kaneko T."/>
            <person name="Kotani H."/>
            <person name="Asamizu E."/>
            <person name="Miyajima N."/>
            <person name="Tabata S."/>
        </authorList>
    </citation>
    <scope>NUCLEOTIDE SEQUENCE [LARGE SCALE GENOMIC DNA]</scope>
    <source>
        <strain>cv. Columbia</strain>
    </source>
</reference>
<reference key="2">
    <citation type="journal article" date="2017" name="Plant J.">
        <title>Araport11: a complete reannotation of the Arabidopsis thaliana reference genome.</title>
        <authorList>
            <person name="Cheng C.Y."/>
            <person name="Krishnakumar V."/>
            <person name="Chan A.P."/>
            <person name="Thibaud-Nissen F."/>
            <person name="Schobel S."/>
            <person name="Town C.D."/>
        </authorList>
    </citation>
    <scope>GENOME REANNOTATION</scope>
    <source>
        <strain>cv. Columbia</strain>
    </source>
</reference>
<reference key="3">
    <citation type="submission" date="2006-07" db="EMBL/GenBank/DDBJ databases">
        <title>Large-scale analysis of RIKEN Arabidopsis full-length (RAFL) cDNAs.</title>
        <authorList>
            <person name="Totoki Y."/>
            <person name="Seki M."/>
            <person name="Ishida J."/>
            <person name="Nakajima M."/>
            <person name="Enju A."/>
            <person name="Kamiya A."/>
            <person name="Narusaka M."/>
            <person name="Shin-i T."/>
            <person name="Nakagawa M."/>
            <person name="Sakamoto N."/>
            <person name="Oishi K."/>
            <person name="Kohara Y."/>
            <person name="Kobayashi M."/>
            <person name="Toyoda A."/>
            <person name="Sakaki Y."/>
            <person name="Sakurai T."/>
            <person name="Iida K."/>
            <person name="Akiyama K."/>
            <person name="Satou M."/>
            <person name="Toyoda T."/>
            <person name="Konagaya A."/>
            <person name="Carninci P."/>
            <person name="Kawai J."/>
            <person name="Hayashizaki Y."/>
            <person name="Shinozaki K."/>
        </authorList>
    </citation>
    <scope>NUCLEOTIDE SEQUENCE [LARGE SCALE MRNA]</scope>
    <source>
        <strain>cv. Columbia</strain>
    </source>
</reference>
<reference key="4">
    <citation type="journal article" date="2004" name="Plant Cell">
        <title>Genome-wide analysis of Arabidopsis pentatricopeptide repeat proteins reveals their essential role in organelle biogenesis.</title>
        <authorList>
            <person name="Lurin C."/>
            <person name="Andres C."/>
            <person name="Aubourg S."/>
            <person name="Bellaoui M."/>
            <person name="Bitton F."/>
            <person name="Bruyere C."/>
            <person name="Caboche M."/>
            <person name="Debast C."/>
            <person name="Gualberto J."/>
            <person name="Hoffmann B."/>
            <person name="Lecharny A."/>
            <person name="Le Ret M."/>
            <person name="Martin-Magniette M.-L."/>
            <person name="Mireau H."/>
            <person name="Peeters N."/>
            <person name="Renou J.-P."/>
            <person name="Szurek B."/>
            <person name="Taconnat L."/>
            <person name="Small I."/>
        </authorList>
    </citation>
    <scope>GENE FAMILY</scope>
</reference>
<name>PP389_ARATH</name>
<organism>
    <name type="scientific">Arabidopsis thaliana</name>
    <name type="common">Mouse-ear cress</name>
    <dbReference type="NCBI Taxonomy" id="3702"/>
    <lineage>
        <taxon>Eukaryota</taxon>
        <taxon>Viridiplantae</taxon>
        <taxon>Streptophyta</taxon>
        <taxon>Embryophyta</taxon>
        <taxon>Tracheophyta</taxon>
        <taxon>Spermatophyta</taxon>
        <taxon>Magnoliopsida</taxon>
        <taxon>eudicotyledons</taxon>
        <taxon>Gunneridae</taxon>
        <taxon>Pentapetalae</taxon>
        <taxon>rosids</taxon>
        <taxon>malvids</taxon>
        <taxon>Brassicales</taxon>
        <taxon>Brassicaceae</taxon>
        <taxon>Camelineae</taxon>
        <taxon>Arabidopsis</taxon>
    </lineage>
</organism>
<gene>
    <name type="ordered locus">At5g16640</name>
    <name type="ORF">MTG13.9</name>
</gene>
<feature type="transit peptide" description="Mitochondrion" evidence="1">
    <location>
        <begin position="1"/>
        <end position="43"/>
    </location>
</feature>
<feature type="chain" id="PRO_0000363526" description="Pentatricopeptide repeat-containing protein At5g16640, mitochondrial">
    <location>
        <begin position="44"/>
        <end position="504"/>
    </location>
</feature>
<feature type="repeat" description="PPR 1">
    <location>
        <begin position="45"/>
        <end position="79"/>
    </location>
</feature>
<feature type="repeat" description="PPR 2">
    <location>
        <begin position="80"/>
        <end position="114"/>
    </location>
</feature>
<feature type="repeat" description="PPR 3">
    <location>
        <begin position="115"/>
        <end position="149"/>
    </location>
</feature>
<feature type="repeat" description="PPR 4">
    <location>
        <begin position="150"/>
        <end position="184"/>
    </location>
</feature>
<feature type="repeat" description="PPR 5">
    <location>
        <begin position="185"/>
        <end position="219"/>
    </location>
</feature>
<feature type="repeat" description="PPR 6">
    <location>
        <begin position="220"/>
        <end position="254"/>
    </location>
</feature>
<feature type="repeat" description="PPR 7">
    <location>
        <begin position="255"/>
        <end position="289"/>
    </location>
</feature>
<feature type="repeat" description="PPR 8">
    <location>
        <begin position="290"/>
        <end position="324"/>
    </location>
</feature>
<feature type="repeat" description="PPR 9">
    <location>
        <begin position="325"/>
        <end position="359"/>
    </location>
</feature>
<feature type="repeat" description="PPR 10">
    <location>
        <begin position="360"/>
        <end position="394"/>
    </location>
</feature>
<feature type="repeat" description="PPR 11">
    <location>
        <begin position="395"/>
        <end position="429"/>
    </location>
</feature>
<feature type="repeat" description="PPR 12">
    <location>
        <begin position="430"/>
        <end position="464"/>
    </location>
</feature>
<feature type="repeat" description="PPR 13">
    <location>
        <begin position="465"/>
        <end position="499"/>
    </location>
</feature>
<proteinExistence type="evidence at transcript level"/>
<evidence type="ECO:0000255" key="1"/>
<evidence type="ECO:0000305" key="2"/>
<keyword id="KW-0496">Mitochondrion</keyword>
<keyword id="KW-1185">Reference proteome</keyword>
<keyword id="KW-0677">Repeat</keyword>
<keyword id="KW-0809">Transit peptide</keyword>
<protein>
    <recommendedName>
        <fullName>Pentatricopeptide repeat-containing protein At5g16640, mitochondrial</fullName>
    </recommendedName>
</protein>